<reference key="1">
    <citation type="journal article" date="1995" name="Science">
        <title>Whole-genome random sequencing and assembly of Haemophilus influenzae Rd.</title>
        <authorList>
            <person name="Fleischmann R.D."/>
            <person name="Adams M.D."/>
            <person name="White O."/>
            <person name="Clayton R.A."/>
            <person name="Kirkness E.F."/>
            <person name="Kerlavage A.R."/>
            <person name="Bult C.J."/>
            <person name="Tomb J.-F."/>
            <person name="Dougherty B.A."/>
            <person name="Merrick J.M."/>
            <person name="McKenney K."/>
            <person name="Sutton G.G."/>
            <person name="FitzHugh W."/>
            <person name="Fields C.A."/>
            <person name="Gocayne J.D."/>
            <person name="Scott J.D."/>
            <person name="Shirley R."/>
            <person name="Liu L.-I."/>
            <person name="Glodek A."/>
            <person name="Kelley J.M."/>
            <person name="Weidman J.F."/>
            <person name="Phillips C.A."/>
            <person name="Spriggs T."/>
            <person name="Hedblom E."/>
            <person name="Cotton M.D."/>
            <person name="Utterback T.R."/>
            <person name="Hanna M.C."/>
            <person name="Nguyen D.T."/>
            <person name="Saudek D.M."/>
            <person name="Brandon R.C."/>
            <person name="Fine L.D."/>
            <person name="Fritchman J.L."/>
            <person name="Fuhrmann J.L."/>
            <person name="Geoghagen N.S.M."/>
            <person name="Gnehm C.L."/>
            <person name="McDonald L.A."/>
            <person name="Small K.V."/>
            <person name="Fraser C.M."/>
            <person name="Smith H.O."/>
            <person name="Venter J.C."/>
        </authorList>
    </citation>
    <scope>NUCLEOTIDE SEQUENCE [LARGE SCALE GENOMIC DNA]</scope>
    <source>
        <strain>ATCC 51907 / DSM 11121 / KW20 / Rd</strain>
    </source>
</reference>
<dbReference type="EC" id="3.6.1.23" evidence="1"/>
<dbReference type="EMBL" id="L42023">
    <property type="protein sequence ID" value="AAC22615.1"/>
    <property type="molecule type" value="Genomic_DNA"/>
</dbReference>
<dbReference type="PIR" id="H64104">
    <property type="entry name" value="H64104"/>
</dbReference>
<dbReference type="RefSeq" id="NP_439115.1">
    <property type="nucleotide sequence ID" value="NC_000907.1"/>
</dbReference>
<dbReference type="SMR" id="P43792"/>
<dbReference type="STRING" id="71421.HI_0954"/>
<dbReference type="EnsemblBacteria" id="AAC22615">
    <property type="protein sequence ID" value="AAC22615"/>
    <property type="gene ID" value="HI_0954"/>
</dbReference>
<dbReference type="KEGG" id="hin:HI_0954"/>
<dbReference type="PATRIC" id="fig|71421.8.peg.996"/>
<dbReference type="eggNOG" id="COG0756">
    <property type="taxonomic scope" value="Bacteria"/>
</dbReference>
<dbReference type="HOGENOM" id="CLU_068508_1_1_6"/>
<dbReference type="OrthoDB" id="9809956at2"/>
<dbReference type="PhylomeDB" id="P43792"/>
<dbReference type="BioCyc" id="HINF71421:G1GJ1-995-MONOMER"/>
<dbReference type="UniPathway" id="UPA00610">
    <property type="reaction ID" value="UER00666"/>
</dbReference>
<dbReference type="Proteomes" id="UP000000579">
    <property type="component" value="Chromosome"/>
</dbReference>
<dbReference type="GO" id="GO:0004170">
    <property type="term" value="F:dUTP diphosphatase activity"/>
    <property type="evidence" value="ECO:0000318"/>
    <property type="project" value="GO_Central"/>
</dbReference>
<dbReference type="GO" id="GO:0000287">
    <property type="term" value="F:magnesium ion binding"/>
    <property type="evidence" value="ECO:0000318"/>
    <property type="project" value="GO_Central"/>
</dbReference>
<dbReference type="GO" id="GO:0006226">
    <property type="term" value="P:dUMP biosynthetic process"/>
    <property type="evidence" value="ECO:0000318"/>
    <property type="project" value="GO_Central"/>
</dbReference>
<dbReference type="GO" id="GO:0046081">
    <property type="term" value="P:dUTP catabolic process"/>
    <property type="evidence" value="ECO:0000318"/>
    <property type="project" value="GO_Central"/>
</dbReference>
<dbReference type="CDD" id="cd07557">
    <property type="entry name" value="trimeric_dUTPase"/>
    <property type="match status" value="1"/>
</dbReference>
<dbReference type="FunFam" id="2.70.40.10:FF:000002">
    <property type="entry name" value="dUTP diphosphatase"/>
    <property type="match status" value="1"/>
</dbReference>
<dbReference type="Gene3D" id="2.70.40.10">
    <property type="match status" value="1"/>
</dbReference>
<dbReference type="HAMAP" id="MF_00116">
    <property type="entry name" value="dUTPase_bact"/>
    <property type="match status" value="1"/>
</dbReference>
<dbReference type="InterPro" id="IPR008181">
    <property type="entry name" value="dUTPase"/>
</dbReference>
<dbReference type="InterPro" id="IPR029054">
    <property type="entry name" value="dUTPase-like"/>
</dbReference>
<dbReference type="InterPro" id="IPR036157">
    <property type="entry name" value="dUTPase-like_sf"/>
</dbReference>
<dbReference type="InterPro" id="IPR033704">
    <property type="entry name" value="dUTPase_trimeric"/>
</dbReference>
<dbReference type="NCBIfam" id="TIGR00576">
    <property type="entry name" value="dut"/>
    <property type="match status" value="1"/>
</dbReference>
<dbReference type="NCBIfam" id="NF001862">
    <property type="entry name" value="PRK00601.1"/>
    <property type="match status" value="1"/>
</dbReference>
<dbReference type="PANTHER" id="PTHR11241">
    <property type="entry name" value="DEOXYURIDINE 5'-TRIPHOSPHATE NUCLEOTIDOHYDROLASE"/>
    <property type="match status" value="1"/>
</dbReference>
<dbReference type="PANTHER" id="PTHR11241:SF0">
    <property type="entry name" value="DEOXYURIDINE 5'-TRIPHOSPHATE NUCLEOTIDOHYDROLASE"/>
    <property type="match status" value="1"/>
</dbReference>
<dbReference type="Pfam" id="PF00692">
    <property type="entry name" value="dUTPase"/>
    <property type="match status" value="1"/>
</dbReference>
<dbReference type="SUPFAM" id="SSF51283">
    <property type="entry name" value="dUTPase-like"/>
    <property type="match status" value="1"/>
</dbReference>
<name>DUT_HAEIN</name>
<sequence length="151" mass="16445">MKKIDVKILDSRIGNEFPLPTYATEGSAGLDLRALIDESFEIQPGETKLIPTGLSIYIADPNLAAVILPRSGLGHKHGIVLGNLVGLIDSDYQGPLMVSMWNRGNEPFKIEVGDRIAQLVFVPVVQAEFNIVEDFQQTERGEGGFGHSGKQ</sequence>
<organism>
    <name type="scientific">Haemophilus influenzae (strain ATCC 51907 / DSM 11121 / KW20 / Rd)</name>
    <dbReference type="NCBI Taxonomy" id="71421"/>
    <lineage>
        <taxon>Bacteria</taxon>
        <taxon>Pseudomonadati</taxon>
        <taxon>Pseudomonadota</taxon>
        <taxon>Gammaproteobacteria</taxon>
        <taxon>Pasteurellales</taxon>
        <taxon>Pasteurellaceae</taxon>
        <taxon>Haemophilus</taxon>
    </lineage>
</organism>
<comment type="function">
    <text evidence="1">This enzyme is involved in nucleotide metabolism: it produces dUMP, the immediate precursor of thymidine nucleotides and it decreases the intracellular concentration of dUTP so that uracil cannot be incorporated into DNA.</text>
</comment>
<comment type="catalytic activity">
    <reaction evidence="1">
        <text>dUTP + H2O = dUMP + diphosphate + H(+)</text>
        <dbReference type="Rhea" id="RHEA:10248"/>
        <dbReference type="ChEBI" id="CHEBI:15377"/>
        <dbReference type="ChEBI" id="CHEBI:15378"/>
        <dbReference type="ChEBI" id="CHEBI:33019"/>
        <dbReference type="ChEBI" id="CHEBI:61555"/>
        <dbReference type="ChEBI" id="CHEBI:246422"/>
        <dbReference type="EC" id="3.6.1.23"/>
    </reaction>
</comment>
<comment type="cofactor">
    <cofactor evidence="1">
        <name>Mg(2+)</name>
        <dbReference type="ChEBI" id="CHEBI:18420"/>
    </cofactor>
</comment>
<comment type="pathway">
    <text evidence="1">Pyrimidine metabolism; dUMP biosynthesis; dUMP from dCTP (dUTP route): step 2/2.</text>
</comment>
<comment type="similarity">
    <text evidence="1">Belongs to the dUTPase family.</text>
</comment>
<feature type="chain" id="PRO_0000182867" description="Deoxyuridine 5'-triphosphate nucleotidohydrolase">
    <location>
        <begin position="1"/>
        <end position="151"/>
    </location>
</feature>
<feature type="binding site" evidence="1">
    <location>
        <begin position="70"/>
        <end position="72"/>
    </location>
    <ligand>
        <name>substrate</name>
    </ligand>
</feature>
<feature type="binding site" evidence="1">
    <location>
        <position position="83"/>
    </location>
    <ligand>
        <name>substrate</name>
    </ligand>
</feature>
<feature type="binding site" evidence="1">
    <location>
        <begin position="87"/>
        <end position="89"/>
    </location>
    <ligand>
        <name>substrate</name>
    </ligand>
</feature>
<feature type="binding site" evidence="1">
    <location>
        <position position="97"/>
    </location>
    <ligand>
        <name>substrate</name>
    </ligand>
</feature>
<accession>P43792</accession>
<protein>
    <recommendedName>
        <fullName evidence="1">Deoxyuridine 5'-triphosphate nucleotidohydrolase</fullName>
        <shortName evidence="1">dUTPase</shortName>
        <ecNumber evidence="1">3.6.1.23</ecNumber>
    </recommendedName>
    <alternativeName>
        <fullName evidence="1">dUTP pyrophosphatase</fullName>
    </alternativeName>
</protein>
<proteinExistence type="inferred from homology"/>
<gene>
    <name evidence="1" type="primary">dut</name>
    <name type="ordered locus">HI_0954</name>
</gene>
<keyword id="KW-0378">Hydrolase</keyword>
<keyword id="KW-0460">Magnesium</keyword>
<keyword id="KW-0479">Metal-binding</keyword>
<keyword id="KW-0546">Nucleotide metabolism</keyword>
<keyword id="KW-1185">Reference proteome</keyword>
<evidence type="ECO:0000255" key="1">
    <source>
        <dbReference type="HAMAP-Rule" id="MF_00116"/>
    </source>
</evidence>